<organism>
    <name type="scientific">Salmonella gallinarum (strain 287/91 / NCTC 13346)</name>
    <dbReference type="NCBI Taxonomy" id="550538"/>
    <lineage>
        <taxon>Bacteria</taxon>
        <taxon>Pseudomonadati</taxon>
        <taxon>Pseudomonadota</taxon>
        <taxon>Gammaproteobacteria</taxon>
        <taxon>Enterobacterales</taxon>
        <taxon>Enterobacteriaceae</taxon>
        <taxon>Salmonella</taxon>
    </lineage>
</organism>
<proteinExistence type="inferred from homology"/>
<dbReference type="EC" id="3.6.1.73" evidence="1"/>
<dbReference type="EMBL" id="AM933173">
    <property type="protein sequence ID" value="CAR40168.1"/>
    <property type="molecule type" value="Genomic_DNA"/>
</dbReference>
<dbReference type="RefSeq" id="WP_000554310.1">
    <property type="nucleotide sequence ID" value="NC_011274.1"/>
</dbReference>
<dbReference type="SMR" id="B5R9W2"/>
<dbReference type="KEGG" id="seg:SG4406"/>
<dbReference type="HOGENOM" id="CLU_087417_1_0_6"/>
<dbReference type="Proteomes" id="UP000008321">
    <property type="component" value="Chromosome"/>
</dbReference>
<dbReference type="GO" id="GO:0103023">
    <property type="term" value="F:ITPase activity"/>
    <property type="evidence" value="ECO:0007669"/>
    <property type="project" value="UniProtKB-EC"/>
</dbReference>
<dbReference type="GO" id="GO:0046872">
    <property type="term" value="F:metal ion binding"/>
    <property type="evidence" value="ECO:0007669"/>
    <property type="project" value="UniProtKB-KW"/>
</dbReference>
<dbReference type="GO" id="GO:0000166">
    <property type="term" value="F:nucleotide binding"/>
    <property type="evidence" value="ECO:0007669"/>
    <property type="project" value="UniProtKB-KW"/>
</dbReference>
<dbReference type="GO" id="GO:0017111">
    <property type="term" value="F:ribonucleoside triphosphate phosphatase activity"/>
    <property type="evidence" value="ECO:0000250"/>
    <property type="project" value="UniProtKB"/>
</dbReference>
<dbReference type="GO" id="GO:0009117">
    <property type="term" value="P:nucleotide metabolic process"/>
    <property type="evidence" value="ECO:0007669"/>
    <property type="project" value="UniProtKB-KW"/>
</dbReference>
<dbReference type="GO" id="GO:0006772">
    <property type="term" value="P:thiamine metabolic process"/>
    <property type="evidence" value="ECO:0007669"/>
    <property type="project" value="TreeGrafter"/>
</dbReference>
<dbReference type="FunFam" id="3.90.950.10:FF:000002">
    <property type="entry name" value="Inosine/xanthosine triphosphatase"/>
    <property type="match status" value="1"/>
</dbReference>
<dbReference type="Gene3D" id="3.90.950.10">
    <property type="match status" value="1"/>
</dbReference>
<dbReference type="HAMAP" id="MF_00648">
    <property type="entry name" value="Non_canon_purine_NTPase_YjjX"/>
    <property type="match status" value="1"/>
</dbReference>
<dbReference type="InterPro" id="IPR029001">
    <property type="entry name" value="ITPase-like_fam"/>
</dbReference>
<dbReference type="InterPro" id="IPR002786">
    <property type="entry name" value="Non_canon_purine_NTPase"/>
</dbReference>
<dbReference type="InterPro" id="IPR026533">
    <property type="entry name" value="NTPase/PRRC1"/>
</dbReference>
<dbReference type="InterPro" id="IPR050299">
    <property type="entry name" value="YjjX_NTPase"/>
</dbReference>
<dbReference type="NCBIfam" id="TIGR00258">
    <property type="entry name" value="inosine/xanthosine triphosphatase"/>
    <property type="match status" value="1"/>
</dbReference>
<dbReference type="NCBIfam" id="NF003459">
    <property type="entry name" value="PRK05074.1"/>
    <property type="match status" value="1"/>
</dbReference>
<dbReference type="PANTHER" id="PTHR34699">
    <property type="match status" value="1"/>
</dbReference>
<dbReference type="PANTHER" id="PTHR34699:SF2">
    <property type="entry name" value="NON-CANONICAL PURINE NTP PHOSPHATASE_PRRC1 DOMAIN-CONTAINING PROTEIN"/>
    <property type="match status" value="1"/>
</dbReference>
<dbReference type="Pfam" id="PF01931">
    <property type="entry name" value="NTPase_I-T"/>
    <property type="match status" value="1"/>
</dbReference>
<dbReference type="SUPFAM" id="SSF52972">
    <property type="entry name" value="ITPase-like"/>
    <property type="match status" value="1"/>
</dbReference>
<feature type="chain" id="PRO_1000130945" description="Inosine/xanthosine triphosphatase">
    <location>
        <begin position="1"/>
        <end position="171"/>
    </location>
</feature>
<feature type="binding site" evidence="1">
    <location>
        <begin position="8"/>
        <end position="13"/>
    </location>
    <ligand>
        <name>substrate</name>
    </ligand>
</feature>
<feature type="binding site" evidence="1">
    <location>
        <position position="38"/>
    </location>
    <ligand>
        <name>Mg(2+)</name>
        <dbReference type="ChEBI" id="CHEBI:18420"/>
    </ligand>
</feature>
<feature type="binding site" evidence="1">
    <location>
        <position position="68"/>
    </location>
    <ligand>
        <name>Mg(2+)</name>
        <dbReference type="ChEBI" id="CHEBI:18420"/>
    </ligand>
</feature>
<gene>
    <name type="primary">yjjX</name>
    <name type="ordered locus">SG4406</name>
</gene>
<comment type="function">
    <text evidence="1">Phosphatase that hydrolyzes non-canonical purine nucleotides such as XTP and ITP to their respective diphosphate derivatives. Probably excludes non-canonical purines from DNA/RNA precursor pool, thus preventing their incorporation into DNA/RNA and avoiding chromosomal lesions.</text>
</comment>
<comment type="catalytic activity">
    <reaction evidence="1">
        <text>XTP + H2O = XDP + phosphate + H(+)</text>
        <dbReference type="Rhea" id="RHEA:28406"/>
        <dbReference type="ChEBI" id="CHEBI:15377"/>
        <dbReference type="ChEBI" id="CHEBI:15378"/>
        <dbReference type="ChEBI" id="CHEBI:43474"/>
        <dbReference type="ChEBI" id="CHEBI:59884"/>
        <dbReference type="ChEBI" id="CHEBI:61314"/>
        <dbReference type="EC" id="3.6.1.73"/>
    </reaction>
</comment>
<comment type="catalytic activity">
    <reaction evidence="1">
        <text>ITP + H2O = IDP + phosphate + H(+)</text>
        <dbReference type="Rhea" id="RHEA:28330"/>
        <dbReference type="ChEBI" id="CHEBI:15377"/>
        <dbReference type="ChEBI" id="CHEBI:15378"/>
        <dbReference type="ChEBI" id="CHEBI:43474"/>
        <dbReference type="ChEBI" id="CHEBI:58280"/>
        <dbReference type="ChEBI" id="CHEBI:61402"/>
        <dbReference type="EC" id="3.6.1.73"/>
    </reaction>
</comment>
<comment type="cofactor">
    <cofactor evidence="1">
        <name>Mg(2+)</name>
        <dbReference type="ChEBI" id="CHEBI:18420"/>
    </cofactor>
    <cofactor evidence="1">
        <name>Mn(2+)</name>
        <dbReference type="ChEBI" id="CHEBI:29035"/>
    </cofactor>
    <text evidence="1">Binds 1 divalent metal cation per subunit; can use either Mg(2+) or Mn(2+).</text>
</comment>
<comment type="subunit">
    <text evidence="1">Homodimer.</text>
</comment>
<comment type="similarity">
    <text evidence="1">Belongs to the YjjX NTPase family.</text>
</comment>
<evidence type="ECO:0000255" key="1">
    <source>
        <dbReference type="HAMAP-Rule" id="MF_00648"/>
    </source>
</evidence>
<sequence>MHQVISATTNPAKIQAILQAFEEIFGEGSCHITPVAVESGVPEQPFGSEETRAGARNRVDNARRLHPQADFWVAIEAGIDDDATFSWVVIDNGVQRGEARSATLPLPAVILDRVRQGEALGPVMSHYTGIDEIGRKEGAIGVFTAGKLTRSSVYYQAVILALSPFHNAVYR</sequence>
<reference key="1">
    <citation type="journal article" date="2008" name="Genome Res.">
        <title>Comparative genome analysis of Salmonella enteritidis PT4 and Salmonella gallinarum 287/91 provides insights into evolutionary and host adaptation pathways.</title>
        <authorList>
            <person name="Thomson N.R."/>
            <person name="Clayton D.J."/>
            <person name="Windhorst D."/>
            <person name="Vernikos G."/>
            <person name="Davidson S."/>
            <person name="Churcher C."/>
            <person name="Quail M.A."/>
            <person name="Stevens M."/>
            <person name="Jones M.A."/>
            <person name="Watson M."/>
            <person name="Barron A."/>
            <person name="Layton A."/>
            <person name="Pickard D."/>
            <person name="Kingsley R.A."/>
            <person name="Bignell A."/>
            <person name="Clark L."/>
            <person name="Harris B."/>
            <person name="Ormond D."/>
            <person name="Abdellah Z."/>
            <person name="Brooks K."/>
            <person name="Cherevach I."/>
            <person name="Chillingworth T."/>
            <person name="Woodward J."/>
            <person name="Norberczak H."/>
            <person name="Lord A."/>
            <person name="Arrowsmith C."/>
            <person name="Jagels K."/>
            <person name="Moule S."/>
            <person name="Mungall K."/>
            <person name="Saunders M."/>
            <person name="Whitehead S."/>
            <person name="Chabalgoity J.A."/>
            <person name="Maskell D."/>
            <person name="Humphreys T."/>
            <person name="Roberts M."/>
            <person name="Barrow P.A."/>
            <person name="Dougan G."/>
            <person name="Parkhill J."/>
        </authorList>
    </citation>
    <scope>NUCLEOTIDE SEQUENCE [LARGE SCALE GENOMIC DNA]</scope>
    <source>
        <strain>287/91 / NCTC 13346</strain>
    </source>
</reference>
<name>NCPP_SALG2</name>
<protein>
    <recommendedName>
        <fullName evidence="1">Inosine/xanthosine triphosphatase</fullName>
        <shortName evidence="1">ITPase/XTPase</shortName>
        <ecNumber evidence="1">3.6.1.73</ecNumber>
    </recommendedName>
    <alternativeName>
        <fullName evidence="1">Non-canonical purine NTP phosphatase</fullName>
    </alternativeName>
    <alternativeName>
        <fullName evidence="1">Non-standard purine NTP phosphatase</fullName>
    </alternativeName>
    <alternativeName>
        <fullName evidence="1">Nucleoside-triphosphate phosphatase</fullName>
        <shortName evidence="1">NTPase</shortName>
    </alternativeName>
</protein>
<accession>B5R9W2</accession>
<keyword id="KW-0378">Hydrolase</keyword>
<keyword id="KW-0460">Magnesium</keyword>
<keyword id="KW-0464">Manganese</keyword>
<keyword id="KW-0479">Metal-binding</keyword>
<keyword id="KW-0546">Nucleotide metabolism</keyword>
<keyword id="KW-0547">Nucleotide-binding</keyword>